<accession>Q60107</accession>
<keyword id="KW-0963">Cytoplasm</keyword>
<keyword id="KW-0378">Hydrolase</keyword>
<keyword id="KW-0645">Protease</keyword>
<keyword id="KW-0720">Serine protease</keyword>
<evidence type="ECO:0000255" key="1">
    <source>
        <dbReference type="HAMAP-Rule" id="MF_00444"/>
    </source>
</evidence>
<proteinExistence type="inferred from homology"/>
<reference key="1">
    <citation type="journal article" date="1997" name="Mol. Microbiol.">
        <title>The ClpP protein, a subunit of the Clp protease, modulates ail gene expression in Yersinia enterocolitica.</title>
        <authorList>
            <person name="Pederson K.J."/>
            <person name="Carlson S."/>
            <person name="Pierson D.E."/>
        </authorList>
    </citation>
    <scope>NUCLEOTIDE SEQUENCE [GENOMIC DNA]</scope>
    <source>
        <strain>8081C / Serotype O:8</strain>
    </source>
</reference>
<name>CLPP_YEREN</name>
<sequence>MSYSGERDQFAPNMALVPMVVEQTSRGERSYDIFSRLLKERIIFLTGQVEDHMANLITAQMLFLEAENPEKDIFLYINSPGGVITAGMSIYDTMQFIKPDVSTICMGQACSMGAFLLTAGAKGKRFCLPNSRVMIHQPLGGFQGQATDIEIHAKEILKVKSRMNELMAKHTGKSLEEIERDTERDRFLSADEAVEYGLVDSVFTRRD</sequence>
<organism>
    <name type="scientific">Yersinia enterocolitica</name>
    <dbReference type="NCBI Taxonomy" id="630"/>
    <lineage>
        <taxon>Bacteria</taxon>
        <taxon>Pseudomonadati</taxon>
        <taxon>Pseudomonadota</taxon>
        <taxon>Gammaproteobacteria</taxon>
        <taxon>Enterobacterales</taxon>
        <taxon>Yersiniaceae</taxon>
        <taxon>Yersinia</taxon>
    </lineage>
</organism>
<comment type="function">
    <text evidence="1">Cleaves peptides in various proteins in a process that requires ATP hydrolysis. Has a chymotrypsin-like activity. Plays a major role in the degradation of misfolded proteins.</text>
</comment>
<comment type="catalytic activity">
    <reaction evidence="1">
        <text>Hydrolysis of proteins to small peptides in the presence of ATP and magnesium. alpha-casein is the usual test substrate. In the absence of ATP, only oligopeptides shorter than five residues are hydrolyzed (such as succinyl-Leu-Tyr-|-NHMec, and Leu-Tyr-Leu-|-Tyr-Trp, in which cleavage of the -Tyr-|-Leu- and -Tyr-|-Trp bonds also occurs).</text>
        <dbReference type="EC" id="3.4.21.92"/>
    </reaction>
</comment>
<comment type="subunit">
    <text evidence="1">Fourteen ClpP subunits assemble into 2 heptameric rings which stack back to back to give a disk-like structure with a central cavity, resembling the structure of eukaryotic proteasomes.</text>
</comment>
<comment type="subcellular location">
    <subcellularLocation>
        <location evidence="1">Cytoplasm</location>
    </subcellularLocation>
</comment>
<comment type="similarity">
    <text evidence="1">Belongs to the peptidase S14 family.</text>
</comment>
<feature type="chain" id="PRO_0000179724" description="ATP-dependent Clp protease proteolytic subunit">
    <location>
        <begin position="1"/>
        <end position="207"/>
    </location>
</feature>
<feature type="active site" description="Nucleophile" evidence="1">
    <location>
        <position position="111"/>
    </location>
</feature>
<feature type="active site" evidence="1">
    <location>
        <position position="136"/>
    </location>
</feature>
<protein>
    <recommendedName>
        <fullName evidence="1">ATP-dependent Clp protease proteolytic subunit</fullName>
        <ecNumber evidence="1">3.4.21.92</ecNumber>
    </recommendedName>
    <alternativeName>
        <fullName evidence="1">Endopeptidase Clp</fullName>
    </alternativeName>
</protein>
<gene>
    <name evidence="1" type="primary">clpP</name>
</gene>
<dbReference type="EC" id="3.4.21.92" evidence="1"/>
<dbReference type="EMBL" id="U55059">
    <property type="protein sequence ID" value="AAC45782.1"/>
    <property type="molecule type" value="Genomic_DNA"/>
</dbReference>
<dbReference type="RefSeq" id="WP_005167636.1">
    <property type="nucleotide sequence ID" value="NZ_NWMR01000009.1"/>
</dbReference>
<dbReference type="SMR" id="Q60107"/>
<dbReference type="STRING" id="1443113.LC20_01387"/>
<dbReference type="MEROPS" id="S14.001"/>
<dbReference type="GeneID" id="93971815"/>
<dbReference type="eggNOG" id="COG0740">
    <property type="taxonomic scope" value="Bacteria"/>
</dbReference>
<dbReference type="BRENDA" id="3.4.21.92">
    <property type="organism ID" value="6741"/>
</dbReference>
<dbReference type="GO" id="GO:0005737">
    <property type="term" value="C:cytoplasm"/>
    <property type="evidence" value="ECO:0007669"/>
    <property type="project" value="UniProtKB-SubCell"/>
</dbReference>
<dbReference type="GO" id="GO:0009368">
    <property type="term" value="C:endopeptidase Clp complex"/>
    <property type="evidence" value="ECO:0007669"/>
    <property type="project" value="TreeGrafter"/>
</dbReference>
<dbReference type="GO" id="GO:0004176">
    <property type="term" value="F:ATP-dependent peptidase activity"/>
    <property type="evidence" value="ECO:0007669"/>
    <property type="project" value="InterPro"/>
</dbReference>
<dbReference type="GO" id="GO:0051117">
    <property type="term" value="F:ATPase binding"/>
    <property type="evidence" value="ECO:0007669"/>
    <property type="project" value="TreeGrafter"/>
</dbReference>
<dbReference type="GO" id="GO:0004252">
    <property type="term" value="F:serine-type endopeptidase activity"/>
    <property type="evidence" value="ECO:0007669"/>
    <property type="project" value="UniProtKB-UniRule"/>
</dbReference>
<dbReference type="GO" id="GO:0006515">
    <property type="term" value="P:protein quality control for misfolded or incompletely synthesized proteins"/>
    <property type="evidence" value="ECO:0007669"/>
    <property type="project" value="TreeGrafter"/>
</dbReference>
<dbReference type="CDD" id="cd07017">
    <property type="entry name" value="S14_ClpP_2"/>
    <property type="match status" value="1"/>
</dbReference>
<dbReference type="FunFam" id="3.90.226.10:FF:000001">
    <property type="entry name" value="ATP-dependent Clp protease proteolytic subunit"/>
    <property type="match status" value="1"/>
</dbReference>
<dbReference type="Gene3D" id="3.90.226.10">
    <property type="entry name" value="2-enoyl-CoA Hydratase, Chain A, domain 1"/>
    <property type="match status" value="1"/>
</dbReference>
<dbReference type="HAMAP" id="MF_00444">
    <property type="entry name" value="ClpP"/>
    <property type="match status" value="1"/>
</dbReference>
<dbReference type="InterPro" id="IPR001907">
    <property type="entry name" value="ClpP"/>
</dbReference>
<dbReference type="InterPro" id="IPR029045">
    <property type="entry name" value="ClpP/crotonase-like_dom_sf"/>
</dbReference>
<dbReference type="InterPro" id="IPR023562">
    <property type="entry name" value="ClpP/TepA"/>
</dbReference>
<dbReference type="InterPro" id="IPR033135">
    <property type="entry name" value="ClpP_His_AS"/>
</dbReference>
<dbReference type="InterPro" id="IPR018215">
    <property type="entry name" value="ClpP_Ser_AS"/>
</dbReference>
<dbReference type="NCBIfam" id="TIGR00493">
    <property type="entry name" value="clpP"/>
    <property type="match status" value="1"/>
</dbReference>
<dbReference type="NCBIfam" id="NF001368">
    <property type="entry name" value="PRK00277.1"/>
    <property type="match status" value="1"/>
</dbReference>
<dbReference type="NCBIfam" id="NF009205">
    <property type="entry name" value="PRK12553.1"/>
    <property type="match status" value="1"/>
</dbReference>
<dbReference type="PANTHER" id="PTHR10381">
    <property type="entry name" value="ATP-DEPENDENT CLP PROTEASE PROTEOLYTIC SUBUNIT"/>
    <property type="match status" value="1"/>
</dbReference>
<dbReference type="PANTHER" id="PTHR10381:SF70">
    <property type="entry name" value="ATP-DEPENDENT CLP PROTEASE PROTEOLYTIC SUBUNIT"/>
    <property type="match status" value="1"/>
</dbReference>
<dbReference type="Pfam" id="PF00574">
    <property type="entry name" value="CLP_protease"/>
    <property type="match status" value="1"/>
</dbReference>
<dbReference type="PRINTS" id="PR00127">
    <property type="entry name" value="CLPPROTEASEP"/>
</dbReference>
<dbReference type="SUPFAM" id="SSF52096">
    <property type="entry name" value="ClpP/crotonase"/>
    <property type="match status" value="1"/>
</dbReference>
<dbReference type="PROSITE" id="PS00382">
    <property type="entry name" value="CLP_PROTEASE_HIS"/>
    <property type="match status" value="1"/>
</dbReference>
<dbReference type="PROSITE" id="PS00381">
    <property type="entry name" value="CLP_PROTEASE_SER"/>
    <property type="match status" value="1"/>
</dbReference>